<protein>
    <recommendedName>
        <fullName evidence="1">Flap endonuclease 1</fullName>
        <shortName evidence="1">FEN-1</shortName>
        <ecNumber evidence="1">3.1.-.-</ecNumber>
    </recommendedName>
    <alternativeName>
        <fullName evidence="1">Flap structure-specific endonuclease 1</fullName>
    </alternativeName>
</protein>
<feature type="chain" id="PRO_0000403609" description="Flap endonuclease 1">
    <location>
        <begin position="1"/>
        <end position="368"/>
    </location>
</feature>
<feature type="region of interest" description="N-domain">
    <location>
        <begin position="1"/>
        <end position="104"/>
    </location>
</feature>
<feature type="region of interest" description="Disordered" evidence="2">
    <location>
        <begin position="103"/>
        <end position="123"/>
    </location>
</feature>
<feature type="region of interest" description="I-domain">
    <location>
        <begin position="122"/>
        <end position="251"/>
    </location>
</feature>
<feature type="region of interest" description="Interaction with PCNA" evidence="1">
    <location>
        <begin position="334"/>
        <end position="342"/>
    </location>
</feature>
<feature type="binding site" evidence="1">
    <location>
        <position position="34"/>
    </location>
    <ligand>
        <name>Mg(2+)</name>
        <dbReference type="ChEBI" id="CHEBI:18420"/>
        <label>1</label>
    </ligand>
</feature>
<feature type="binding site" evidence="1">
    <location>
        <position position="47"/>
    </location>
    <ligand>
        <name>DNA</name>
        <dbReference type="ChEBI" id="CHEBI:16991"/>
    </ligand>
</feature>
<feature type="binding site" evidence="1">
    <location>
        <position position="70"/>
    </location>
    <ligand>
        <name>DNA</name>
        <dbReference type="ChEBI" id="CHEBI:16991"/>
    </ligand>
</feature>
<feature type="binding site" evidence="1">
    <location>
        <position position="86"/>
    </location>
    <ligand>
        <name>Mg(2+)</name>
        <dbReference type="ChEBI" id="CHEBI:18420"/>
        <label>1</label>
    </ligand>
</feature>
<feature type="binding site" evidence="1">
    <location>
        <position position="158"/>
    </location>
    <ligand>
        <name>DNA</name>
        <dbReference type="ChEBI" id="CHEBI:16991"/>
    </ligand>
</feature>
<feature type="binding site" evidence="1">
    <location>
        <position position="158"/>
    </location>
    <ligand>
        <name>Mg(2+)</name>
        <dbReference type="ChEBI" id="CHEBI:18420"/>
        <label>1</label>
    </ligand>
</feature>
<feature type="binding site" evidence="1">
    <location>
        <position position="160"/>
    </location>
    <ligand>
        <name>Mg(2+)</name>
        <dbReference type="ChEBI" id="CHEBI:18420"/>
        <label>1</label>
    </ligand>
</feature>
<feature type="binding site" evidence="1">
    <location>
        <position position="179"/>
    </location>
    <ligand>
        <name>Mg(2+)</name>
        <dbReference type="ChEBI" id="CHEBI:18420"/>
        <label>2</label>
    </ligand>
</feature>
<feature type="binding site" evidence="1">
    <location>
        <position position="181"/>
    </location>
    <ligand>
        <name>Mg(2+)</name>
        <dbReference type="ChEBI" id="CHEBI:18420"/>
        <label>2</label>
    </ligand>
</feature>
<feature type="binding site" evidence="1">
    <location>
        <position position="229"/>
    </location>
    <ligand>
        <name>DNA</name>
        <dbReference type="ChEBI" id="CHEBI:16991"/>
    </ligand>
</feature>
<feature type="binding site" evidence="1">
    <location>
        <position position="231"/>
    </location>
    <ligand>
        <name>DNA</name>
        <dbReference type="ChEBI" id="CHEBI:16991"/>
    </ligand>
</feature>
<feature type="binding site" evidence="1">
    <location>
        <position position="231"/>
    </location>
    <ligand>
        <name>Mg(2+)</name>
        <dbReference type="ChEBI" id="CHEBI:18420"/>
        <label>2</label>
    </ligand>
</feature>
<reference key="1">
    <citation type="journal article" date="2008" name="Nature">
        <title>The genome of the choanoflagellate Monosiga brevicollis and the origin of metazoans.</title>
        <authorList>
            <consortium name="JGI Sequencing"/>
            <person name="King N."/>
            <person name="Westbrook M.J."/>
            <person name="Young S.L."/>
            <person name="Kuo A."/>
            <person name="Abedin M."/>
            <person name="Chapman J."/>
            <person name="Fairclough S."/>
            <person name="Hellsten U."/>
            <person name="Isogai Y."/>
            <person name="Letunic I."/>
            <person name="Marr M."/>
            <person name="Pincus D."/>
            <person name="Putnam N."/>
            <person name="Rokas A."/>
            <person name="Wright K.J."/>
            <person name="Zuzow R."/>
            <person name="Dirks W."/>
            <person name="Good M."/>
            <person name="Goodstein D."/>
            <person name="Lemons D."/>
            <person name="Li W."/>
            <person name="Lyons J.B."/>
            <person name="Morris A."/>
            <person name="Nichols S."/>
            <person name="Richter D.J."/>
            <person name="Salamov A."/>
            <person name="Bork P."/>
            <person name="Lim W.A."/>
            <person name="Manning G."/>
            <person name="Miller W.T."/>
            <person name="McGinnis W."/>
            <person name="Shapiro H."/>
            <person name="Tjian R."/>
            <person name="Grigoriev I.V."/>
            <person name="Rokhsar D."/>
        </authorList>
    </citation>
    <scope>NUCLEOTIDE SEQUENCE [LARGE SCALE GENOMIC DNA]</scope>
    <source>
        <strain>MX1 / ATCC 50154</strain>
    </source>
</reference>
<accession>A9VB27</accession>
<name>FEN1_MONBE</name>
<evidence type="ECO:0000255" key="1">
    <source>
        <dbReference type="HAMAP-Rule" id="MF_03140"/>
    </source>
</evidence>
<evidence type="ECO:0000256" key="2">
    <source>
        <dbReference type="SAM" id="MobiDB-lite"/>
    </source>
</evidence>
<organism>
    <name type="scientific">Monosiga brevicollis</name>
    <name type="common">Choanoflagellate</name>
    <dbReference type="NCBI Taxonomy" id="81824"/>
    <lineage>
        <taxon>Eukaryota</taxon>
        <taxon>Choanoflagellata</taxon>
        <taxon>Craspedida</taxon>
        <taxon>Salpingoecidae</taxon>
        <taxon>Monosiga</taxon>
    </lineage>
</organism>
<keyword id="KW-0227">DNA damage</keyword>
<keyword id="KW-0234">DNA repair</keyword>
<keyword id="KW-0235">DNA replication</keyword>
<keyword id="KW-0255">Endonuclease</keyword>
<keyword id="KW-0269">Exonuclease</keyword>
<keyword id="KW-0378">Hydrolase</keyword>
<keyword id="KW-0460">Magnesium</keyword>
<keyword id="KW-0479">Metal-binding</keyword>
<keyword id="KW-0496">Mitochondrion</keyword>
<keyword id="KW-0540">Nuclease</keyword>
<keyword id="KW-0539">Nucleus</keyword>
<keyword id="KW-0597">Phosphoprotein</keyword>
<keyword id="KW-1185">Reference proteome</keyword>
<sequence>MGIHDLSKVIADKAPDAIKETEIKNLFDRKVAIDASMSIYQFLIAIRSEGSNLVNEAGEATSHLSGLFYRTIRMVNHGIKPLYVFDGKPPTMKSGELLKRGARRKEAQANLEEATEQGDTEQMEKFSRRLVHVTREHNEQCRQLLTLMGIPFIIAPTEAEAQCAELVKGGKVFATATEDMDALTFGTTVLLRHMTFSEARKMPIQEFRLQKGGLEMSMEEFIDMCILLGCDYCDSIKGIGRQKAYQLIKEHKNIETVLKHLDPKKYVIPEDWHFAEARELFLRPDVTPAAECEFKWTTPDIDGLVKFMCQENGFAEDRIRKSAEKLVKARKGGQQGRLDSFFTAIPSGSAKRNTVGLLPKPGPPPFLF</sequence>
<dbReference type="EC" id="3.1.-.-" evidence="1"/>
<dbReference type="EMBL" id="CH991575">
    <property type="protein sequence ID" value="EDQ85265.1"/>
    <property type="molecule type" value="Genomic_DNA"/>
</dbReference>
<dbReference type="RefSeq" id="XP_001749886.1">
    <property type="nucleotide sequence ID" value="XM_001749834.1"/>
</dbReference>
<dbReference type="SMR" id="A9VB27"/>
<dbReference type="FunCoup" id="A9VB27">
    <property type="interactions" value="1375"/>
</dbReference>
<dbReference type="STRING" id="81824.A9VB27"/>
<dbReference type="EnsemblProtists" id="EDQ85265">
    <property type="protein sequence ID" value="EDQ85265"/>
    <property type="gene ID" value="MONBRDRAFT_29430"/>
</dbReference>
<dbReference type="KEGG" id="mbr:MONBRDRAFT_29430"/>
<dbReference type="eggNOG" id="KOG2519">
    <property type="taxonomic scope" value="Eukaryota"/>
</dbReference>
<dbReference type="InParanoid" id="A9VB27"/>
<dbReference type="OMA" id="MGIPWVQ"/>
<dbReference type="Proteomes" id="UP000001357">
    <property type="component" value="Unassembled WGS sequence"/>
</dbReference>
<dbReference type="GO" id="GO:0005739">
    <property type="term" value="C:mitochondrion"/>
    <property type="evidence" value="ECO:0007669"/>
    <property type="project" value="UniProtKB-SubCell"/>
</dbReference>
<dbReference type="GO" id="GO:0005730">
    <property type="term" value="C:nucleolus"/>
    <property type="evidence" value="ECO:0007669"/>
    <property type="project" value="UniProtKB-SubCell"/>
</dbReference>
<dbReference type="GO" id="GO:0005654">
    <property type="term" value="C:nucleoplasm"/>
    <property type="evidence" value="ECO:0007669"/>
    <property type="project" value="UniProtKB-SubCell"/>
</dbReference>
<dbReference type="GO" id="GO:0005634">
    <property type="term" value="C:nucleus"/>
    <property type="evidence" value="ECO:0000318"/>
    <property type="project" value="GO_Central"/>
</dbReference>
<dbReference type="GO" id="GO:0008409">
    <property type="term" value="F:5'-3' exonuclease activity"/>
    <property type="evidence" value="ECO:0000318"/>
    <property type="project" value="GO_Central"/>
</dbReference>
<dbReference type="GO" id="GO:0017108">
    <property type="term" value="F:5'-flap endonuclease activity"/>
    <property type="evidence" value="ECO:0000318"/>
    <property type="project" value="GO_Central"/>
</dbReference>
<dbReference type="GO" id="GO:0003677">
    <property type="term" value="F:DNA binding"/>
    <property type="evidence" value="ECO:0007669"/>
    <property type="project" value="UniProtKB-UniRule"/>
</dbReference>
<dbReference type="GO" id="GO:0000287">
    <property type="term" value="F:magnesium ion binding"/>
    <property type="evidence" value="ECO:0000318"/>
    <property type="project" value="GO_Central"/>
</dbReference>
<dbReference type="GO" id="GO:0030145">
    <property type="term" value="F:manganese ion binding"/>
    <property type="evidence" value="ECO:0000318"/>
    <property type="project" value="GO_Central"/>
</dbReference>
<dbReference type="GO" id="GO:0004523">
    <property type="term" value="F:RNA-DNA hybrid ribonuclease activity"/>
    <property type="evidence" value="ECO:0000318"/>
    <property type="project" value="GO_Central"/>
</dbReference>
<dbReference type="GO" id="GO:0006284">
    <property type="term" value="P:base-excision repair"/>
    <property type="evidence" value="ECO:0007669"/>
    <property type="project" value="UniProtKB-UniRule"/>
</dbReference>
<dbReference type="GO" id="GO:0043137">
    <property type="term" value="P:DNA replication, removal of RNA primer"/>
    <property type="evidence" value="ECO:0007669"/>
    <property type="project" value="UniProtKB-UniRule"/>
</dbReference>
<dbReference type="CDD" id="cd09867">
    <property type="entry name" value="PIN_FEN1"/>
    <property type="match status" value="1"/>
</dbReference>
<dbReference type="FunFam" id="1.10.150.20:FF:000009">
    <property type="entry name" value="Flap endonuclease 1"/>
    <property type="match status" value="1"/>
</dbReference>
<dbReference type="FunFam" id="3.40.50.1010:FF:000003">
    <property type="entry name" value="Flap endonuclease 1"/>
    <property type="match status" value="1"/>
</dbReference>
<dbReference type="Gene3D" id="1.10.150.20">
    <property type="entry name" value="5' to 3' exonuclease, C-terminal subdomain"/>
    <property type="match status" value="1"/>
</dbReference>
<dbReference type="Gene3D" id="3.40.50.1010">
    <property type="entry name" value="5'-nuclease"/>
    <property type="match status" value="1"/>
</dbReference>
<dbReference type="HAMAP" id="MF_00614">
    <property type="entry name" value="Fen"/>
    <property type="match status" value="1"/>
</dbReference>
<dbReference type="InterPro" id="IPR036279">
    <property type="entry name" value="5-3_exonuclease_C_sf"/>
</dbReference>
<dbReference type="InterPro" id="IPR023426">
    <property type="entry name" value="Flap_endonuc"/>
</dbReference>
<dbReference type="InterPro" id="IPR008918">
    <property type="entry name" value="HhH2"/>
</dbReference>
<dbReference type="InterPro" id="IPR029060">
    <property type="entry name" value="PIN-like_dom_sf"/>
</dbReference>
<dbReference type="InterPro" id="IPR006086">
    <property type="entry name" value="XPG-I_dom"/>
</dbReference>
<dbReference type="InterPro" id="IPR006084">
    <property type="entry name" value="XPG/Rad2"/>
</dbReference>
<dbReference type="InterPro" id="IPR019974">
    <property type="entry name" value="XPG_CS"/>
</dbReference>
<dbReference type="InterPro" id="IPR006085">
    <property type="entry name" value="XPG_DNA_repair_N"/>
</dbReference>
<dbReference type="PANTHER" id="PTHR11081:SF9">
    <property type="entry name" value="FLAP ENDONUCLEASE 1"/>
    <property type="match status" value="1"/>
</dbReference>
<dbReference type="PANTHER" id="PTHR11081">
    <property type="entry name" value="FLAP ENDONUCLEASE FAMILY MEMBER"/>
    <property type="match status" value="1"/>
</dbReference>
<dbReference type="Pfam" id="PF00867">
    <property type="entry name" value="XPG_I"/>
    <property type="match status" value="1"/>
</dbReference>
<dbReference type="Pfam" id="PF00752">
    <property type="entry name" value="XPG_N"/>
    <property type="match status" value="1"/>
</dbReference>
<dbReference type="PRINTS" id="PR00853">
    <property type="entry name" value="XPGRADSUPER"/>
</dbReference>
<dbReference type="SMART" id="SM00279">
    <property type="entry name" value="HhH2"/>
    <property type="match status" value="1"/>
</dbReference>
<dbReference type="SMART" id="SM00484">
    <property type="entry name" value="XPGI"/>
    <property type="match status" value="1"/>
</dbReference>
<dbReference type="SMART" id="SM00485">
    <property type="entry name" value="XPGN"/>
    <property type="match status" value="1"/>
</dbReference>
<dbReference type="SUPFAM" id="SSF47807">
    <property type="entry name" value="5' to 3' exonuclease, C-terminal subdomain"/>
    <property type="match status" value="1"/>
</dbReference>
<dbReference type="SUPFAM" id="SSF88723">
    <property type="entry name" value="PIN domain-like"/>
    <property type="match status" value="1"/>
</dbReference>
<dbReference type="PROSITE" id="PS00841">
    <property type="entry name" value="XPG_1"/>
    <property type="match status" value="1"/>
</dbReference>
<dbReference type="PROSITE" id="PS00842">
    <property type="entry name" value="XPG_2"/>
    <property type="match status" value="1"/>
</dbReference>
<proteinExistence type="inferred from homology"/>
<comment type="function">
    <text evidence="1">Structure-specific nuclease with 5'-flap endonuclease and 5'-3' exonuclease activities involved in DNA replication and repair. During DNA replication, cleaves the 5'-overhanging flap structure that is generated by displacement synthesis when DNA polymerase encounters the 5'-end of a downstream Okazaki fragment. It enters the flap from the 5'-end and then tracks to cleave the flap base, leaving a nick for ligation. Also involved in the long patch base excision repair (LP-BER) pathway, by cleaving within the apurinic/apyrimidinic (AP) site-terminated flap. Acts as a genome stabilization factor that prevents flaps from equilibrating into structures that lead to duplications and deletions. Also possesses 5'-3' exonuclease activity on nicked or gapped double-stranded DNA, and exhibits RNase H activity. Also involved in replication and repair of rDNA and in repairing mitochondrial DNA.</text>
</comment>
<comment type="cofactor">
    <cofactor evidence="1">
        <name>Mg(2+)</name>
        <dbReference type="ChEBI" id="CHEBI:18420"/>
    </cofactor>
    <text evidence="1">Binds 2 magnesium ions per subunit. They probably participate in the reaction catalyzed by the enzyme. May bind an additional third magnesium ion after substrate binding.</text>
</comment>
<comment type="subunit">
    <text evidence="1">Interacts with PCNA. Three molecules of FEN1 bind to one PCNA trimer with each molecule binding to one PCNA monomer. PCNA stimulates the nuclease activity without altering cleavage specificity.</text>
</comment>
<comment type="subcellular location">
    <subcellularLocation>
        <location evidence="1">Nucleus</location>
        <location evidence="1">Nucleolus</location>
    </subcellularLocation>
    <subcellularLocation>
        <location evidence="1">Nucleus</location>
        <location evidence="1">Nucleoplasm</location>
    </subcellularLocation>
    <subcellularLocation>
        <location evidence="1">Mitochondrion</location>
    </subcellularLocation>
    <text evidence="1">Resides mostly in the nucleoli and relocalizes to the nucleoplasm upon DNA damage.</text>
</comment>
<comment type="PTM">
    <text evidence="1">Phosphorylated. Phosphorylation upon DNA damage induces relocalization to the nuclear plasma.</text>
</comment>
<comment type="similarity">
    <text evidence="1">Belongs to the XPG/RAD2 endonuclease family. FEN1 subfamily.</text>
</comment>
<gene>
    <name evidence="1" type="primary">FEN1</name>
    <name type="ORF">29430</name>
</gene>